<organism>
    <name type="scientific">Listeria welshimeri serovar 6b (strain ATCC 35897 / DSM 20650 / CCUG 15529 / CIP 8149 / NCTC 11857 / SLCC 5334 / V8)</name>
    <dbReference type="NCBI Taxonomy" id="386043"/>
    <lineage>
        <taxon>Bacteria</taxon>
        <taxon>Bacillati</taxon>
        <taxon>Bacillota</taxon>
        <taxon>Bacilli</taxon>
        <taxon>Bacillales</taxon>
        <taxon>Listeriaceae</taxon>
        <taxon>Listeria</taxon>
    </lineage>
</organism>
<reference key="1">
    <citation type="journal article" date="2006" name="J. Bacteriol.">
        <title>Whole-genome sequence of Listeria welshimeri reveals common steps in genome reduction with Listeria innocua as compared to Listeria monocytogenes.</title>
        <authorList>
            <person name="Hain T."/>
            <person name="Steinweg C."/>
            <person name="Kuenne C.T."/>
            <person name="Billion A."/>
            <person name="Ghai R."/>
            <person name="Chatterjee S.S."/>
            <person name="Domann E."/>
            <person name="Kaerst U."/>
            <person name="Goesmann A."/>
            <person name="Bekel T."/>
            <person name="Bartels D."/>
            <person name="Kaiser O."/>
            <person name="Meyer F."/>
            <person name="Puehler A."/>
            <person name="Weisshaar B."/>
            <person name="Wehland J."/>
            <person name="Liang C."/>
            <person name="Dandekar T."/>
            <person name="Lampidis R."/>
            <person name="Kreft J."/>
            <person name="Goebel W."/>
            <person name="Chakraborty T."/>
        </authorList>
    </citation>
    <scope>NUCLEOTIDE SEQUENCE [LARGE SCALE GENOMIC DNA]</scope>
    <source>
        <strain>ATCC 35897 / DSM 20650 / CCUG 15529 / CIP 8149 / NCTC 11857 / SLCC 5334 / V8</strain>
    </source>
</reference>
<keyword id="KW-0119">Carbohydrate metabolism</keyword>
<keyword id="KW-0963">Cytoplasm</keyword>
<keyword id="KW-0413">Isomerase</keyword>
<keyword id="KW-0460">Magnesium</keyword>
<keyword id="KW-0479">Metal-binding</keyword>
<keyword id="KW-0859">Xylose metabolism</keyword>
<comment type="catalytic activity">
    <reaction evidence="1">
        <text>alpha-D-xylose = alpha-D-xylulofuranose</text>
        <dbReference type="Rhea" id="RHEA:22816"/>
        <dbReference type="ChEBI" id="CHEBI:28518"/>
        <dbReference type="ChEBI" id="CHEBI:188998"/>
        <dbReference type="EC" id="5.3.1.5"/>
    </reaction>
</comment>
<comment type="cofactor">
    <cofactor evidence="1">
        <name>Mg(2+)</name>
        <dbReference type="ChEBI" id="CHEBI:18420"/>
    </cofactor>
    <text evidence="1">Binds 2 magnesium ions per subunit.</text>
</comment>
<comment type="subunit">
    <text evidence="1">Homotetramer.</text>
</comment>
<comment type="subcellular location">
    <subcellularLocation>
        <location evidence="1">Cytoplasm</location>
    </subcellularLocation>
</comment>
<comment type="similarity">
    <text evidence="1">Belongs to the xylose isomerase family.</text>
</comment>
<proteinExistence type="inferred from homology"/>
<feature type="chain" id="PRO_1000026445" description="Xylose isomerase">
    <location>
        <begin position="1"/>
        <end position="435"/>
    </location>
</feature>
<feature type="active site" evidence="1">
    <location>
        <position position="99"/>
    </location>
</feature>
<feature type="active site" evidence="1">
    <location>
        <position position="102"/>
    </location>
</feature>
<feature type="binding site" evidence="1">
    <location>
        <position position="230"/>
    </location>
    <ligand>
        <name>Mg(2+)</name>
        <dbReference type="ChEBI" id="CHEBI:18420"/>
        <label>1</label>
    </ligand>
</feature>
<feature type="binding site" evidence="1">
    <location>
        <position position="266"/>
    </location>
    <ligand>
        <name>Mg(2+)</name>
        <dbReference type="ChEBI" id="CHEBI:18420"/>
        <label>1</label>
    </ligand>
</feature>
<feature type="binding site" evidence="1">
    <location>
        <position position="266"/>
    </location>
    <ligand>
        <name>Mg(2+)</name>
        <dbReference type="ChEBI" id="CHEBI:18420"/>
        <label>2</label>
    </ligand>
</feature>
<feature type="binding site" evidence="1">
    <location>
        <position position="269"/>
    </location>
    <ligand>
        <name>Mg(2+)</name>
        <dbReference type="ChEBI" id="CHEBI:18420"/>
        <label>2</label>
    </ligand>
</feature>
<feature type="binding site" evidence="1">
    <location>
        <position position="294"/>
    </location>
    <ligand>
        <name>Mg(2+)</name>
        <dbReference type="ChEBI" id="CHEBI:18420"/>
        <label>1</label>
    </ligand>
</feature>
<feature type="binding site" evidence="1">
    <location>
        <position position="305"/>
    </location>
    <ligand>
        <name>Mg(2+)</name>
        <dbReference type="ChEBI" id="CHEBI:18420"/>
        <label>2</label>
    </ligand>
</feature>
<feature type="binding site" evidence="1">
    <location>
        <position position="307"/>
    </location>
    <ligand>
        <name>Mg(2+)</name>
        <dbReference type="ChEBI" id="CHEBI:18420"/>
        <label>2</label>
    </ligand>
</feature>
<feature type="binding site" evidence="1">
    <location>
        <position position="337"/>
    </location>
    <ligand>
        <name>Mg(2+)</name>
        <dbReference type="ChEBI" id="CHEBI:18420"/>
        <label>1</label>
    </ligand>
</feature>
<sequence>MTYFKQIEKINYEGVQSGNRFAFRHYNPEEVVLGKSMKEHLRFAVAYWHTMTQDGSDPFGAATNVRDVSGKTEMELARNRVEMFFEILEKLGVEYFCFHDVDIAPEGNSLQEFMRNLDEITDLIQDKMKQTGIKLLWNTANLFTHPRFLNGAASTNNADVYAFSAAQIKKGLDISKKLGGKNYVFWGGREGYESLLNTDMEFEQANMARMYKMAIRYANEIEHEVQFLIEPKPKEPTKHQYDFDAATTMAFLQKYGLENDFKLNLEANHATLAGHTFEHELNVARTYNALGSIDANQGDLLLGWDTDEFPTNIYDTTLTMYEILQNGGIAPGGINFDAKVRRTSFEMEDLLLAHIAGMDTYARGLKAAAKLTEDHFFDKIKEERYRSFKKGIGARILDNQEDFKSLTEYALAHDSIQNESSHIEYVKSRLNDYLV</sequence>
<gene>
    <name evidence="1" type="primary">xylA</name>
    <name type="ordered locus">lwe0243</name>
</gene>
<evidence type="ECO:0000255" key="1">
    <source>
        <dbReference type="HAMAP-Rule" id="MF_00455"/>
    </source>
</evidence>
<dbReference type="EC" id="5.3.1.5" evidence="1"/>
<dbReference type="EMBL" id="AM263198">
    <property type="protein sequence ID" value="CAK19661.1"/>
    <property type="molecule type" value="Genomic_DNA"/>
</dbReference>
<dbReference type="RefSeq" id="WP_011701102.1">
    <property type="nucleotide sequence ID" value="NC_008555.1"/>
</dbReference>
<dbReference type="SMR" id="A0AF79"/>
<dbReference type="STRING" id="386043.lwe0243"/>
<dbReference type="GeneID" id="61188136"/>
<dbReference type="KEGG" id="lwe:lwe0243"/>
<dbReference type="eggNOG" id="COG2115">
    <property type="taxonomic scope" value="Bacteria"/>
</dbReference>
<dbReference type="HOGENOM" id="CLU_037261_1_0_9"/>
<dbReference type="OrthoDB" id="9763981at2"/>
<dbReference type="Proteomes" id="UP000000779">
    <property type="component" value="Chromosome"/>
</dbReference>
<dbReference type="GO" id="GO:0005737">
    <property type="term" value="C:cytoplasm"/>
    <property type="evidence" value="ECO:0007669"/>
    <property type="project" value="UniProtKB-SubCell"/>
</dbReference>
<dbReference type="GO" id="GO:0000287">
    <property type="term" value="F:magnesium ion binding"/>
    <property type="evidence" value="ECO:0007669"/>
    <property type="project" value="UniProtKB-UniRule"/>
</dbReference>
<dbReference type="GO" id="GO:0009045">
    <property type="term" value="F:xylose isomerase activity"/>
    <property type="evidence" value="ECO:0007669"/>
    <property type="project" value="UniProtKB-UniRule"/>
</dbReference>
<dbReference type="GO" id="GO:0042732">
    <property type="term" value="P:D-xylose metabolic process"/>
    <property type="evidence" value="ECO:0007669"/>
    <property type="project" value="UniProtKB-UniRule"/>
</dbReference>
<dbReference type="Gene3D" id="3.20.20.150">
    <property type="entry name" value="Divalent-metal-dependent TIM barrel enzymes"/>
    <property type="match status" value="1"/>
</dbReference>
<dbReference type="HAMAP" id="MF_00455">
    <property type="entry name" value="Xylose_isom_A"/>
    <property type="match status" value="1"/>
</dbReference>
<dbReference type="InterPro" id="IPR036237">
    <property type="entry name" value="Xyl_isomerase-like_sf"/>
</dbReference>
<dbReference type="InterPro" id="IPR013022">
    <property type="entry name" value="Xyl_isomerase-like_TIM-brl"/>
</dbReference>
<dbReference type="InterPro" id="IPR013452">
    <property type="entry name" value="Xylose_isom_bac"/>
</dbReference>
<dbReference type="InterPro" id="IPR001998">
    <property type="entry name" value="Xylose_isomerase"/>
</dbReference>
<dbReference type="NCBIfam" id="NF003998">
    <property type="entry name" value="PRK05474.1"/>
    <property type="match status" value="1"/>
</dbReference>
<dbReference type="NCBIfam" id="TIGR02630">
    <property type="entry name" value="xylose_isom_A"/>
    <property type="match status" value="1"/>
</dbReference>
<dbReference type="PANTHER" id="PTHR48408">
    <property type="match status" value="1"/>
</dbReference>
<dbReference type="PANTHER" id="PTHR48408:SF1">
    <property type="entry name" value="XYLOSE ISOMERASE"/>
    <property type="match status" value="1"/>
</dbReference>
<dbReference type="Pfam" id="PF01261">
    <property type="entry name" value="AP_endonuc_2"/>
    <property type="match status" value="1"/>
</dbReference>
<dbReference type="PRINTS" id="PR00688">
    <property type="entry name" value="XYLOSISMRASE"/>
</dbReference>
<dbReference type="SUPFAM" id="SSF51658">
    <property type="entry name" value="Xylose isomerase-like"/>
    <property type="match status" value="1"/>
</dbReference>
<dbReference type="PROSITE" id="PS51415">
    <property type="entry name" value="XYLOSE_ISOMERASE"/>
    <property type="match status" value="1"/>
</dbReference>
<accession>A0AF79</accession>
<protein>
    <recommendedName>
        <fullName evidence="1">Xylose isomerase</fullName>
        <ecNumber evidence="1">5.3.1.5</ecNumber>
    </recommendedName>
</protein>
<name>XYLA_LISW6</name>